<proteinExistence type="evidence at transcript level"/>
<name>BPE_ARATH</name>
<reference key="1">
    <citation type="journal article" date="2006" name="EMBO J.">
        <title>BIGPETALp, a bHLH transcription factor is involved in the control of Arabidopsis petal size.</title>
        <authorList>
            <person name="Szecsi J."/>
            <person name="Joly C."/>
            <person name="Bordji K."/>
            <person name="Varaud E."/>
            <person name="Cock J.M."/>
            <person name="Dumas C."/>
            <person name="Bendahmane M."/>
        </authorList>
    </citation>
    <scope>NUCLEOTIDE SEQUENCE [MRNA] (ISOFORMS 1 AND 2)</scope>
    <scope>FUNCTION</scope>
    <scope>ALTERNATIVE SPLICING</scope>
    <scope>INDUCTION</scope>
    <scope>TISSUE SPECIFICITY</scope>
    <source>
        <strain>cv. Columbia</strain>
    </source>
</reference>
<reference key="2">
    <citation type="journal article" date="2000" name="Nature">
        <title>Sequence and analysis of chromosome 1 of the plant Arabidopsis thaliana.</title>
        <authorList>
            <person name="Theologis A."/>
            <person name="Ecker J.R."/>
            <person name="Palm C.J."/>
            <person name="Federspiel N.A."/>
            <person name="Kaul S."/>
            <person name="White O."/>
            <person name="Alonso J."/>
            <person name="Altafi H."/>
            <person name="Araujo R."/>
            <person name="Bowman C.L."/>
            <person name="Brooks S.Y."/>
            <person name="Buehler E."/>
            <person name="Chan A."/>
            <person name="Chao Q."/>
            <person name="Chen H."/>
            <person name="Cheuk R.F."/>
            <person name="Chin C.W."/>
            <person name="Chung M.K."/>
            <person name="Conn L."/>
            <person name="Conway A.B."/>
            <person name="Conway A.R."/>
            <person name="Creasy T.H."/>
            <person name="Dewar K."/>
            <person name="Dunn P."/>
            <person name="Etgu P."/>
            <person name="Feldblyum T.V."/>
            <person name="Feng J.-D."/>
            <person name="Fong B."/>
            <person name="Fujii C.Y."/>
            <person name="Gill J.E."/>
            <person name="Goldsmith A.D."/>
            <person name="Haas B."/>
            <person name="Hansen N.F."/>
            <person name="Hughes B."/>
            <person name="Huizar L."/>
            <person name="Hunter J.L."/>
            <person name="Jenkins J."/>
            <person name="Johnson-Hopson C."/>
            <person name="Khan S."/>
            <person name="Khaykin E."/>
            <person name="Kim C.J."/>
            <person name="Koo H.L."/>
            <person name="Kremenetskaia I."/>
            <person name="Kurtz D.B."/>
            <person name="Kwan A."/>
            <person name="Lam B."/>
            <person name="Langin-Hooper S."/>
            <person name="Lee A."/>
            <person name="Lee J.M."/>
            <person name="Lenz C.A."/>
            <person name="Li J.H."/>
            <person name="Li Y.-P."/>
            <person name="Lin X."/>
            <person name="Liu S.X."/>
            <person name="Liu Z.A."/>
            <person name="Luros J.S."/>
            <person name="Maiti R."/>
            <person name="Marziali A."/>
            <person name="Militscher J."/>
            <person name="Miranda M."/>
            <person name="Nguyen M."/>
            <person name="Nierman W.C."/>
            <person name="Osborne B.I."/>
            <person name="Pai G."/>
            <person name="Peterson J."/>
            <person name="Pham P.K."/>
            <person name="Rizzo M."/>
            <person name="Rooney T."/>
            <person name="Rowley D."/>
            <person name="Sakano H."/>
            <person name="Salzberg S.L."/>
            <person name="Schwartz J.R."/>
            <person name="Shinn P."/>
            <person name="Southwick A.M."/>
            <person name="Sun H."/>
            <person name="Tallon L.J."/>
            <person name="Tambunga G."/>
            <person name="Toriumi M.J."/>
            <person name="Town C.D."/>
            <person name="Utterback T."/>
            <person name="Van Aken S."/>
            <person name="Vaysberg M."/>
            <person name="Vysotskaia V.S."/>
            <person name="Walker M."/>
            <person name="Wu D."/>
            <person name="Yu G."/>
            <person name="Fraser C.M."/>
            <person name="Venter J.C."/>
            <person name="Davis R.W."/>
        </authorList>
    </citation>
    <scope>NUCLEOTIDE SEQUENCE [LARGE SCALE GENOMIC DNA]</scope>
    <source>
        <strain>cv. Columbia</strain>
    </source>
</reference>
<reference key="3">
    <citation type="journal article" date="2017" name="Plant J.">
        <title>Araport11: a complete reannotation of the Arabidopsis thaliana reference genome.</title>
        <authorList>
            <person name="Cheng C.Y."/>
            <person name="Krishnakumar V."/>
            <person name="Chan A.P."/>
            <person name="Thibaud-Nissen F."/>
            <person name="Schobel S."/>
            <person name="Town C.D."/>
        </authorList>
    </citation>
    <scope>GENOME REANNOTATION</scope>
    <source>
        <strain>cv. Columbia</strain>
    </source>
</reference>
<reference key="4">
    <citation type="journal article" date="2003" name="Science">
        <title>Empirical analysis of transcriptional activity in the Arabidopsis genome.</title>
        <authorList>
            <person name="Yamada K."/>
            <person name="Lim J."/>
            <person name="Dale J.M."/>
            <person name="Chen H."/>
            <person name="Shinn P."/>
            <person name="Palm C.J."/>
            <person name="Southwick A.M."/>
            <person name="Wu H.C."/>
            <person name="Kim C.J."/>
            <person name="Nguyen M."/>
            <person name="Pham P.K."/>
            <person name="Cheuk R.F."/>
            <person name="Karlin-Newmann G."/>
            <person name="Liu S.X."/>
            <person name="Lam B."/>
            <person name="Sakano H."/>
            <person name="Wu T."/>
            <person name="Yu G."/>
            <person name="Miranda M."/>
            <person name="Quach H.L."/>
            <person name="Tripp M."/>
            <person name="Chang C.H."/>
            <person name="Lee J.M."/>
            <person name="Toriumi M.J."/>
            <person name="Chan M.M."/>
            <person name="Tang C.C."/>
            <person name="Onodera C.S."/>
            <person name="Deng J.M."/>
            <person name="Akiyama K."/>
            <person name="Ansari Y."/>
            <person name="Arakawa T."/>
            <person name="Banh J."/>
            <person name="Banno F."/>
            <person name="Bowser L."/>
            <person name="Brooks S.Y."/>
            <person name="Carninci P."/>
            <person name="Chao Q."/>
            <person name="Choy N."/>
            <person name="Enju A."/>
            <person name="Goldsmith A.D."/>
            <person name="Gurjal M."/>
            <person name="Hansen N.F."/>
            <person name="Hayashizaki Y."/>
            <person name="Johnson-Hopson C."/>
            <person name="Hsuan V.W."/>
            <person name="Iida K."/>
            <person name="Karnes M."/>
            <person name="Khan S."/>
            <person name="Koesema E."/>
            <person name="Ishida J."/>
            <person name="Jiang P.X."/>
            <person name="Jones T."/>
            <person name="Kawai J."/>
            <person name="Kamiya A."/>
            <person name="Meyers C."/>
            <person name="Nakajima M."/>
            <person name="Narusaka M."/>
            <person name="Seki M."/>
            <person name="Sakurai T."/>
            <person name="Satou M."/>
            <person name="Tamse R."/>
            <person name="Vaysberg M."/>
            <person name="Wallender E.K."/>
            <person name="Wong C."/>
            <person name="Yamamura Y."/>
            <person name="Yuan S."/>
            <person name="Shinozaki K."/>
            <person name="Davis R.W."/>
            <person name="Theologis A."/>
            <person name="Ecker J.R."/>
        </authorList>
    </citation>
    <scope>NUCLEOTIDE SEQUENCE [LARGE SCALE MRNA] (ISOFORM 2)</scope>
    <source>
        <strain>cv. Columbia</strain>
    </source>
</reference>
<reference key="5">
    <citation type="submission" date="2002-03" db="EMBL/GenBank/DDBJ databases">
        <title>Full-length cDNA from Arabidopsis thaliana.</title>
        <authorList>
            <person name="Brover V.V."/>
            <person name="Troukhan M.E."/>
            <person name="Alexandrov N.A."/>
            <person name="Lu Y.-P."/>
            <person name="Flavell R.B."/>
            <person name="Feldmann K.A."/>
        </authorList>
    </citation>
    <scope>NUCLEOTIDE SEQUENCE [LARGE SCALE MRNA] (ISOFORM 2)</scope>
</reference>
<reference key="6">
    <citation type="journal article" date="1999" name="Gene">
        <title>Isolation and analysis of cDNA within a 300 kb Arabidopsis thaliana genomic region located around the 100 map unit of chromosome 1.</title>
        <authorList>
            <person name="Kato A."/>
            <person name="Suzuki M."/>
            <person name="Kuwahara A."/>
            <person name="Ooe H."/>
            <person name="Higano-Inaba K."/>
            <person name="Komeda Y."/>
        </authorList>
    </citation>
    <scope>NUCLEOTIDE SEQUENCE [MRNA] OF 1-318 (ISOFORM 1)</scope>
    <source>
        <strain>cv. Columbia</strain>
    </source>
</reference>
<reference key="7">
    <citation type="journal article" date="2003" name="Mol. Biol. Evol.">
        <title>The basic helix-loop-helix transcription factor family in plants: a genome-wide study of protein structure and functional diversity.</title>
        <authorList>
            <person name="Heim M.A."/>
            <person name="Jakoby M."/>
            <person name="Werber M."/>
            <person name="Martin C."/>
            <person name="Weisshaar B."/>
            <person name="Bailey P.C."/>
        </authorList>
    </citation>
    <scope>GENE FAMILY</scope>
    <scope>NOMENCLATURE</scope>
</reference>
<reference key="8">
    <citation type="journal article" date="2003" name="Plant Cell">
        <title>The Arabidopsis basic/helix-loop-helix transcription factor family.</title>
        <authorList>
            <person name="Toledo-Ortiz G."/>
            <person name="Huq E."/>
            <person name="Quail P.H."/>
        </authorList>
    </citation>
    <scope>GENE FAMILY</scope>
</reference>
<reference key="9">
    <citation type="journal article" date="2003" name="Plant Cell">
        <title>Update on the basic helix-loop-helix transcription factor gene family in Arabidopsis thaliana.</title>
        <authorList>
            <person name="Bailey P.C."/>
            <person name="Martin C."/>
            <person name="Toledo-Ortiz G."/>
            <person name="Quail P.H."/>
            <person name="Huq E."/>
            <person name="Heim M.A."/>
            <person name="Jakoby M."/>
            <person name="Werber M."/>
            <person name="Weisshaar B."/>
        </authorList>
    </citation>
    <scope>GENE FAMILY</scope>
    <scope>NOMENCLATURE</scope>
</reference>
<evidence type="ECO:0000255" key="1">
    <source>
        <dbReference type="PROSITE-ProRule" id="PRU00981"/>
    </source>
</evidence>
<evidence type="ECO:0000269" key="2">
    <source>
    </source>
</evidence>
<evidence type="ECO:0000303" key="3">
    <source>
    </source>
</evidence>
<evidence type="ECO:0000303" key="4">
    <source>
    </source>
</evidence>
<evidence type="ECO:0000303" key="5">
    <source ref="5"/>
</evidence>
<evidence type="ECO:0000305" key="6"/>
<accession>Q0JXE7</accession>
<accession>Q84JL1</accession>
<accession>Q8LCW3</accession>
<accession>Q9LQ51</accession>
<accession>Q9SLT6</accession>
<comment type="function">
    <text evidence="2">Involved in the control of petal size, by interfering with postmitotic cell expansion to limit final petal cell size.</text>
</comment>
<comment type="subunit">
    <text evidence="6">Homodimer.</text>
</comment>
<comment type="subcellular location">
    <subcellularLocation>
        <location evidence="1">Nucleus</location>
    </subcellularLocation>
</comment>
<comment type="alternative products">
    <event type="alternative splicing"/>
    <isoform>
        <id>Q0JXE7-1</id>
        <name>1</name>
        <name>BPEp</name>
        <sequence type="displayed"/>
    </isoform>
    <isoform>
        <id>Q0JXE7-2</id>
        <name>2</name>
        <name>BPEub</name>
        <sequence type="described" ref="VSP_036110 VSP_036111 VSP_036112"/>
    </isoform>
</comment>
<comment type="tissue specificity">
    <molecule>Isoform 1</molecule>
    <text evidence="2">Specifically expressed in flowers, mostly in petals, inflorescence and flower buds.</text>
</comment>
<comment type="tissue specificity">
    <molecule>Isoform 2</molecule>
    <text evidence="2">Expressed ubiquitously (leaves, flowers and stems).</text>
</comment>
<comment type="induction">
    <molecule>Isoform 1</molecule>
    <text evidence="2">Up-regulated by PI/AP3, SEP2, SEP3 and AP1, but repressed by AG.</text>
</comment>
<comment type="sequence caution" evidence="6">
    <conflict type="erroneous gene model prediction">
        <sequence resource="EMBL-CDS" id="AAF79771"/>
    </conflict>
</comment>
<gene>
    <name type="primary">BPE</name>
    <name type="synonym">BHLH31</name>
    <name type="synonym">EN88</name>
    <name type="synonym">ZCW32</name>
    <name type="ordered locus">At1g59640</name>
    <name type="ORF">T30E16.21</name>
</gene>
<sequence>MDPSGMMNEGGPFNLAEIWQFPLNGVSTAGDSSRRSFVGPNQFGDADLTTAANGDPARMSHALSQAVIEGISGAWKRREDESKSAKIVSTIGASEGENKRQKIDEVCDGKAEAESLGTETEQKKQQMEPTKDYIHVRARRGQATDSHSLAERARREKISERMKILQDLVPGCNKVIGKALVLDEIINYIQSLQRQVEFLSMKLEAVNSRMNPGIEVFPPKEVMILMIINSIFSIFFTKQYMFLSRYSRGRSLDVYAVRSFKHCNKRSDLCFCSCSPKTELKTTIFSQNMTCFCRYSRVGVAISSSKHCNEPVTLCFYSYCLRKIYHFLLWNLKYKIQKSVLFS</sequence>
<protein>
    <recommendedName>
        <fullName>Transcription factor BPE</fullName>
    </recommendedName>
    <alternativeName>
        <fullName>Basic helix-loop-helix protein 31</fullName>
        <shortName>AtbHLH31</shortName>
        <shortName>bHLH 31</shortName>
    </alternativeName>
    <alternativeName>
        <fullName>Protein BIG PETAL</fullName>
    </alternativeName>
    <alternativeName>
        <fullName>Transcription factor EN 88</fullName>
    </alternativeName>
    <alternativeName>
        <fullName>bHLH transcription factor bHLH031</fullName>
    </alternativeName>
</protein>
<organism>
    <name type="scientific">Arabidopsis thaliana</name>
    <name type="common">Mouse-ear cress</name>
    <dbReference type="NCBI Taxonomy" id="3702"/>
    <lineage>
        <taxon>Eukaryota</taxon>
        <taxon>Viridiplantae</taxon>
        <taxon>Streptophyta</taxon>
        <taxon>Embryophyta</taxon>
        <taxon>Tracheophyta</taxon>
        <taxon>Spermatophyta</taxon>
        <taxon>Magnoliopsida</taxon>
        <taxon>eudicotyledons</taxon>
        <taxon>Gunneridae</taxon>
        <taxon>Pentapetalae</taxon>
        <taxon>rosids</taxon>
        <taxon>malvids</taxon>
        <taxon>Brassicales</taxon>
        <taxon>Brassicaceae</taxon>
        <taxon>Camelineae</taxon>
        <taxon>Arabidopsis</taxon>
    </lineage>
</organism>
<dbReference type="EMBL" id="AM269753">
    <property type="protein sequence ID" value="CAK32498.1"/>
    <property type="molecule type" value="mRNA"/>
</dbReference>
<dbReference type="EMBL" id="AM269754">
    <property type="protein sequence ID" value="CAK32499.1"/>
    <property type="molecule type" value="mRNA"/>
</dbReference>
<dbReference type="EMBL" id="AC009317">
    <property type="protein sequence ID" value="AAF79771.1"/>
    <property type="status" value="ALT_SEQ"/>
    <property type="molecule type" value="Genomic_DNA"/>
</dbReference>
<dbReference type="EMBL" id="CP002684">
    <property type="protein sequence ID" value="AEE33597.1"/>
    <property type="molecule type" value="Genomic_DNA"/>
</dbReference>
<dbReference type="EMBL" id="CP002684">
    <property type="protein sequence ID" value="AEE33598.1"/>
    <property type="molecule type" value="Genomic_DNA"/>
</dbReference>
<dbReference type="EMBL" id="BT003964">
    <property type="protein sequence ID" value="AAO42009.1"/>
    <property type="molecule type" value="mRNA"/>
</dbReference>
<dbReference type="EMBL" id="BT005064">
    <property type="protein sequence ID" value="AAO50597.1"/>
    <property type="molecule type" value="mRNA"/>
</dbReference>
<dbReference type="EMBL" id="AY086373">
    <property type="protein sequence ID" value="AAM64440.1"/>
    <property type="molecule type" value="mRNA"/>
</dbReference>
<dbReference type="EMBL" id="AB028232">
    <property type="protein sequence ID" value="BAA87957.1"/>
    <property type="molecule type" value="mRNA"/>
</dbReference>
<dbReference type="PIR" id="B96620">
    <property type="entry name" value="B96620"/>
</dbReference>
<dbReference type="PIR" id="T52428">
    <property type="entry name" value="T52428"/>
</dbReference>
<dbReference type="RefSeq" id="NP_564749.1">
    <molecule id="Q0JXE7-2"/>
    <property type="nucleotide sequence ID" value="NM_104657.4"/>
</dbReference>
<dbReference type="RefSeq" id="NP_849829.1">
    <molecule id="Q0JXE7-1"/>
    <property type="nucleotide sequence ID" value="NM_179498.3"/>
</dbReference>
<dbReference type="SMR" id="Q0JXE7"/>
<dbReference type="BioGRID" id="27479">
    <property type="interactions" value="3"/>
</dbReference>
<dbReference type="FunCoup" id="Q0JXE7">
    <property type="interactions" value="26"/>
</dbReference>
<dbReference type="IntAct" id="Q0JXE7">
    <property type="interactions" value="2"/>
</dbReference>
<dbReference type="STRING" id="3702.Q0JXE7"/>
<dbReference type="PaxDb" id="3702-AT1G59640.2"/>
<dbReference type="ProteomicsDB" id="222818">
    <molecule id="Q0JXE7-1"/>
</dbReference>
<dbReference type="EnsemblPlants" id="AT1G59640.1">
    <molecule id="Q0JXE7-2"/>
    <property type="protein sequence ID" value="AT1G59640.1"/>
    <property type="gene ID" value="AT1G59640"/>
</dbReference>
<dbReference type="EnsemblPlants" id="AT1G59640.2">
    <molecule id="Q0JXE7-1"/>
    <property type="protein sequence ID" value="AT1G59640.2"/>
    <property type="gene ID" value="AT1G59640"/>
</dbReference>
<dbReference type="GeneID" id="842254"/>
<dbReference type="Gramene" id="AT1G59640.1">
    <molecule id="Q0JXE7-2"/>
    <property type="protein sequence ID" value="AT1G59640.1"/>
    <property type="gene ID" value="AT1G59640"/>
</dbReference>
<dbReference type="Gramene" id="AT1G59640.2">
    <molecule id="Q0JXE7-1"/>
    <property type="protein sequence ID" value="AT1G59640.2"/>
    <property type="gene ID" value="AT1G59640"/>
</dbReference>
<dbReference type="KEGG" id="ath:AT1G59640"/>
<dbReference type="Araport" id="AT1G59640"/>
<dbReference type="TAIR" id="AT1G59640">
    <property type="gene designation" value="BPEP"/>
</dbReference>
<dbReference type="eggNOG" id="ENOG502QSEM">
    <property type="taxonomic scope" value="Eukaryota"/>
</dbReference>
<dbReference type="InParanoid" id="Q0JXE7"/>
<dbReference type="OMA" id="CEDEHAK"/>
<dbReference type="PhylomeDB" id="Q0JXE7"/>
<dbReference type="PRO" id="PR:Q0JXE7"/>
<dbReference type="Proteomes" id="UP000006548">
    <property type="component" value="Chromosome 1"/>
</dbReference>
<dbReference type="ExpressionAtlas" id="Q0JXE7">
    <property type="expression patterns" value="baseline and differential"/>
</dbReference>
<dbReference type="GO" id="GO:0005634">
    <property type="term" value="C:nucleus"/>
    <property type="evidence" value="ECO:0007669"/>
    <property type="project" value="UniProtKB-SubCell"/>
</dbReference>
<dbReference type="GO" id="GO:0003677">
    <property type="term" value="F:DNA binding"/>
    <property type="evidence" value="ECO:0007669"/>
    <property type="project" value="UniProtKB-KW"/>
</dbReference>
<dbReference type="GO" id="GO:0003700">
    <property type="term" value="F:DNA-binding transcription factor activity"/>
    <property type="evidence" value="ECO:0000250"/>
    <property type="project" value="TAIR"/>
</dbReference>
<dbReference type="GO" id="GO:0046983">
    <property type="term" value="F:protein dimerization activity"/>
    <property type="evidence" value="ECO:0007669"/>
    <property type="project" value="InterPro"/>
</dbReference>
<dbReference type="GO" id="GO:0048446">
    <property type="term" value="P:petal morphogenesis"/>
    <property type="evidence" value="ECO:0000315"/>
    <property type="project" value="TAIR"/>
</dbReference>
<dbReference type="GO" id="GO:0006355">
    <property type="term" value="P:regulation of DNA-templated transcription"/>
    <property type="evidence" value="ECO:0000304"/>
    <property type="project" value="TAIR"/>
</dbReference>
<dbReference type="CDD" id="cd18919">
    <property type="entry name" value="bHLH_AtBPE_like"/>
    <property type="match status" value="1"/>
</dbReference>
<dbReference type="FunFam" id="4.10.280.10:FF:000002">
    <property type="entry name" value="Basic helix-loop-helix transcription factor"/>
    <property type="match status" value="1"/>
</dbReference>
<dbReference type="Gene3D" id="4.10.280.10">
    <property type="entry name" value="Helix-loop-helix DNA-binding domain"/>
    <property type="match status" value="1"/>
</dbReference>
<dbReference type="InterPro" id="IPR011598">
    <property type="entry name" value="bHLH_dom"/>
</dbReference>
<dbReference type="InterPro" id="IPR024097">
    <property type="entry name" value="bHLH_ZIP_TF"/>
</dbReference>
<dbReference type="InterPro" id="IPR036638">
    <property type="entry name" value="HLH_DNA-bd_sf"/>
</dbReference>
<dbReference type="PANTHER" id="PTHR12565">
    <property type="entry name" value="STEROL REGULATORY ELEMENT-BINDING PROTEIN"/>
    <property type="match status" value="1"/>
</dbReference>
<dbReference type="PANTHER" id="PTHR12565:SF460">
    <property type="entry name" value="TRANSCRIPTION FACTOR BPE"/>
    <property type="match status" value="1"/>
</dbReference>
<dbReference type="Pfam" id="PF00010">
    <property type="entry name" value="HLH"/>
    <property type="match status" value="1"/>
</dbReference>
<dbReference type="SMART" id="SM00353">
    <property type="entry name" value="HLH"/>
    <property type="match status" value="1"/>
</dbReference>
<dbReference type="SUPFAM" id="SSF47459">
    <property type="entry name" value="HLH, helix-loop-helix DNA-binding domain"/>
    <property type="match status" value="1"/>
</dbReference>
<dbReference type="PROSITE" id="PS50888">
    <property type="entry name" value="BHLH"/>
    <property type="match status" value="1"/>
</dbReference>
<feature type="chain" id="PRO_0000358841" description="Transcription factor BPE">
    <location>
        <begin position="1"/>
        <end position="343"/>
    </location>
</feature>
<feature type="domain" description="bHLH" evidence="1">
    <location>
        <begin position="142"/>
        <end position="192"/>
    </location>
</feature>
<feature type="splice variant" id="VSP_036110" description="In isoform 2." evidence="3 4 5">
    <original>VMILMIINSIFSIFFTKQYMFLSR</original>
    <variation>FGQQAFENPEIQFGSQSTRE</variation>
    <location>
        <begin position="222"/>
        <end position="245"/>
    </location>
</feature>
<feature type="splice variant" id="VSP_036111" description="In isoform 2." evidence="3 4 5">
    <original>RSLDVYAVRSFKHCNKRSD</original>
    <variation>ASPEWLHMQIGSGGFERTS</variation>
    <location>
        <begin position="250"/>
        <end position="268"/>
    </location>
</feature>
<feature type="splice variant" id="VSP_036112" description="In isoform 2." evidence="3 4 5">
    <location>
        <begin position="269"/>
        <end position="343"/>
    </location>
</feature>
<feature type="sequence conflict" description="In Ref. 5; AAM64440." evidence="6" ref="5">
    <original>A</original>
    <variation>S</variation>
    <location>
        <position position="51"/>
    </location>
</feature>
<keyword id="KW-0025">Alternative splicing</keyword>
<keyword id="KW-0217">Developmental protein</keyword>
<keyword id="KW-0238">DNA-binding</keyword>
<keyword id="KW-0539">Nucleus</keyword>
<keyword id="KW-1185">Reference proteome</keyword>
<keyword id="KW-0804">Transcription</keyword>
<keyword id="KW-0805">Transcription regulation</keyword>